<gene>
    <name evidence="1" type="primary">metK</name>
    <name type="ordered locus">YE3421</name>
</gene>
<name>METK_YERE8</name>
<keyword id="KW-0067">ATP-binding</keyword>
<keyword id="KW-0963">Cytoplasm</keyword>
<keyword id="KW-0460">Magnesium</keyword>
<keyword id="KW-0479">Metal-binding</keyword>
<keyword id="KW-0547">Nucleotide-binding</keyword>
<keyword id="KW-0554">One-carbon metabolism</keyword>
<keyword id="KW-0630">Potassium</keyword>
<keyword id="KW-0808">Transferase</keyword>
<reference key="1">
    <citation type="journal article" date="2006" name="PLoS Genet.">
        <title>The complete genome sequence and comparative genome analysis of the high pathogenicity Yersinia enterocolitica strain 8081.</title>
        <authorList>
            <person name="Thomson N.R."/>
            <person name="Howard S."/>
            <person name="Wren B.W."/>
            <person name="Holden M.T.G."/>
            <person name="Crossman L."/>
            <person name="Challis G.L."/>
            <person name="Churcher C."/>
            <person name="Mungall K."/>
            <person name="Brooks K."/>
            <person name="Chillingworth T."/>
            <person name="Feltwell T."/>
            <person name="Abdellah Z."/>
            <person name="Hauser H."/>
            <person name="Jagels K."/>
            <person name="Maddison M."/>
            <person name="Moule S."/>
            <person name="Sanders M."/>
            <person name="Whitehead S."/>
            <person name="Quail M.A."/>
            <person name="Dougan G."/>
            <person name="Parkhill J."/>
            <person name="Prentice M.B."/>
        </authorList>
    </citation>
    <scope>NUCLEOTIDE SEQUENCE [LARGE SCALE GENOMIC DNA]</scope>
    <source>
        <strain>NCTC 13174 / 8081</strain>
    </source>
</reference>
<feature type="chain" id="PRO_0000303001" description="S-adenosylmethionine synthase">
    <location>
        <begin position="1"/>
        <end position="384"/>
    </location>
</feature>
<feature type="region of interest" description="Flexible loop" evidence="1">
    <location>
        <begin position="99"/>
        <end position="109"/>
    </location>
</feature>
<feature type="binding site" description="in other chain" evidence="1">
    <location>
        <position position="15"/>
    </location>
    <ligand>
        <name>ATP</name>
        <dbReference type="ChEBI" id="CHEBI:30616"/>
        <note>ligand shared between two neighboring subunits</note>
    </ligand>
</feature>
<feature type="binding site" evidence="1">
    <location>
        <position position="17"/>
    </location>
    <ligand>
        <name>Mg(2+)</name>
        <dbReference type="ChEBI" id="CHEBI:18420"/>
    </ligand>
</feature>
<feature type="binding site" evidence="1">
    <location>
        <position position="43"/>
    </location>
    <ligand>
        <name>K(+)</name>
        <dbReference type="ChEBI" id="CHEBI:29103"/>
    </ligand>
</feature>
<feature type="binding site" description="in other chain" evidence="1">
    <location>
        <position position="56"/>
    </location>
    <ligand>
        <name>L-methionine</name>
        <dbReference type="ChEBI" id="CHEBI:57844"/>
        <note>ligand shared between two neighboring subunits</note>
    </ligand>
</feature>
<feature type="binding site" description="in other chain" evidence="1">
    <location>
        <position position="99"/>
    </location>
    <ligand>
        <name>L-methionine</name>
        <dbReference type="ChEBI" id="CHEBI:57844"/>
        <note>ligand shared between two neighboring subunits</note>
    </ligand>
</feature>
<feature type="binding site" description="in other chain" evidence="1">
    <location>
        <begin position="164"/>
        <end position="166"/>
    </location>
    <ligand>
        <name>ATP</name>
        <dbReference type="ChEBI" id="CHEBI:30616"/>
        <note>ligand shared between two neighboring subunits</note>
    </ligand>
</feature>
<feature type="binding site" description="in other chain" evidence="1">
    <location>
        <begin position="230"/>
        <end position="231"/>
    </location>
    <ligand>
        <name>ATP</name>
        <dbReference type="ChEBI" id="CHEBI:30616"/>
        <note>ligand shared between two neighboring subunits</note>
    </ligand>
</feature>
<feature type="binding site" evidence="1">
    <location>
        <position position="239"/>
    </location>
    <ligand>
        <name>ATP</name>
        <dbReference type="ChEBI" id="CHEBI:30616"/>
        <note>ligand shared between two neighboring subunits</note>
    </ligand>
</feature>
<feature type="binding site" evidence="1">
    <location>
        <position position="239"/>
    </location>
    <ligand>
        <name>L-methionine</name>
        <dbReference type="ChEBI" id="CHEBI:57844"/>
        <note>ligand shared between two neighboring subunits</note>
    </ligand>
</feature>
<feature type="binding site" description="in other chain" evidence="1">
    <location>
        <begin position="245"/>
        <end position="246"/>
    </location>
    <ligand>
        <name>ATP</name>
        <dbReference type="ChEBI" id="CHEBI:30616"/>
        <note>ligand shared between two neighboring subunits</note>
    </ligand>
</feature>
<feature type="binding site" evidence="1">
    <location>
        <position position="262"/>
    </location>
    <ligand>
        <name>ATP</name>
        <dbReference type="ChEBI" id="CHEBI:30616"/>
        <note>ligand shared between two neighboring subunits</note>
    </ligand>
</feature>
<feature type="binding site" evidence="1">
    <location>
        <position position="266"/>
    </location>
    <ligand>
        <name>ATP</name>
        <dbReference type="ChEBI" id="CHEBI:30616"/>
        <note>ligand shared between two neighboring subunits</note>
    </ligand>
</feature>
<feature type="binding site" description="in other chain" evidence="1">
    <location>
        <position position="270"/>
    </location>
    <ligand>
        <name>L-methionine</name>
        <dbReference type="ChEBI" id="CHEBI:57844"/>
        <note>ligand shared between two neighboring subunits</note>
    </ligand>
</feature>
<sequence>MAKHLFTSESVSEGHPDKVADQISDAVLDAILEQDPKARVACETYVKTGMVLVGGEVTTNAWVDIEEITRRTVREIGYVNSEMGFDANSCAVLSAIGKQSPDINQGVDRADPLEQGAGDQGLMFGYATNETSVLMPAPITYAHRLVERQAEVRKNGTLPWLRPDAKSQITFQYDDGKIVGIDAVVLSTQHSDDISLTDLQEAVMEEIIKPVLPAEWLSKETKYHINPTGRFVIGGPMGDCGLTGRKIIVDTYGGMARHGGGAFSGKDPSKVDRSAAYAARYVAKNIVAAGLADRCEIQVSYAIGVAEPTSIMVETFGTGKIAEDRLVALVREFFELRPYGLIQMLDLLHPIYRKTAAYGHFGREEFPWEKTDKAALLRDAAGLK</sequence>
<evidence type="ECO:0000255" key="1">
    <source>
        <dbReference type="HAMAP-Rule" id="MF_00086"/>
    </source>
</evidence>
<protein>
    <recommendedName>
        <fullName evidence="1">S-adenosylmethionine synthase</fullName>
        <shortName evidence="1">AdoMet synthase</shortName>
        <ecNumber evidence="1">2.5.1.6</ecNumber>
    </recommendedName>
    <alternativeName>
        <fullName evidence="1">MAT</fullName>
    </alternativeName>
    <alternativeName>
        <fullName evidence="1">Methionine adenosyltransferase</fullName>
    </alternativeName>
</protein>
<accession>A1JPS4</accession>
<dbReference type="EC" id="2.5.1.6" evidence="1"/>
<dbReference type="EMBL" id="AM286415">
    <property type="protein sequence ID" value="CAL13444.1"/>
    <property type="molecule type" value="Genomic_DNA"/>
</dbReference>
<dbReference type="RefSeq" id="WP_011817040.1">
    <property type="nucleotide sequence ID" value="NC_008800.1"/>
</dbReference>
<dbReference type="RefSeq" id="YP_001007586.1">
    <property type="nucleotide sequence ID" value="NC_008800.1"/>
</dbReference>
<dbReference type="SMR" id="A1JPS4"/>
<dbReference type="KEGG" id="yen:YE3421"/>
<dbReference type="PATRIC" id="fig|393305.7.peg.3633"/>
<dbReference type="eggNOG" id="COG0192">
    <property type="taxonomic scope" value="Bacteria"/>
</dbReference>
<dbReference type="HOGENOM" id="CLU_041802_1_1_6"/>
<dbReference type="OrthoDB" id="9801686at2"/>
<dbReference type="UniPathway" id="UPA00315">
    <property type="reaction ID" value="UER00080"/>
</dbReference>
<dbReference type="Proteomes" id="UP000000642">
    <property type="component" value="Chromosome"/>
</dbReference>
<dbReference type="GO" id="GO:0005737">
    <property type="term" value="C:cytoplasm"/>
    <property type="evidence" value="ECO:0007669"/>
    <property type="project" value="UniProtKB-SubCell"/>
</dbReference>
<dbReference type="GO" id="GO:0005524">
    <property type="term" value="F:ATP binding"/>
    <property type="evidence" value="ECO:0007669"/>
    <property type="project" value="UniProtKB-UniRule"/>
</dbReference>
<dbReference type="GO" id="GO:0000287">
    <property type="term" value="F:magnesium ion binding"/>
    <property type="evidence" value="ECO:0007669"/>
    <property type="project" value="UniProtKB-UniRule"/>
</dbReference>
<dbReference type="GO" id="GO:0004478">
    <property type="term" value="F:methionine adenosyltransferase activity"/>
    <property type="evidence" value="ECO:0007669"/>
    <property type="project" value="UniProtKB-UniRule"/>
</dbReference>
<dbReference type="GO" id="GO:0006730">
    <property type="term" value="P:one-carbon metabolic process"/>
    <property type="evidence" value="ECO:0007669"/>
    <property type="project" value="UniProtKB-KW"/>
</dbReference>
<dbReference type="GO" id="GO:0006556">
    <property type="term" value="P:S-adenosylmethionine biosynthetic process"/>
    <property type="evidence" value="ECO:0007669"/>
    <property type="project" value="UniProtKB-UniRule"/>
</dbReference>
<dbReference type="CDD" id="cd18079">
    <property type="entry name" value="S-AdoMet_synt"/>
    <property type="match status" value="1"/>
</dbReference>
<dbReference type="FunFam" id="3.30.300.10:FF:000003">
    <property type="entry name" value="S-adenosylmethionine synthase"/>
    <property type="match status" value="1"/>
</dbReference>
<dbReference type="Gene3D" id="3.30.300.10">
    <property type="match status" value="3"/>
</dbReference>
<dbReference type="HAMAP" id="MF_00086">
    <property type="entry name" value="S_AdoMet_synth1"/>
    <property type="match status" value="1"/>
</dbReference>
<dbReference type="InterPro" id="IPR022631">
    <property type="entry name" value="ADOMET_SYNTHASE_CS"/>
</dbReference>
<dbReference type="InterPro" id="IPR022630">
    <property type="entry name" value="S-AdoMet_synt_C"/>
</dbReference>
<dbReference type="InterPro" id="IPR022629">
    <property type="entry name" value="S-AdoMet_synt_central"/>
</dbReference>
<dbReference type="InterPro" id="IPR022628">
    <property type="entry name" value="S-AdoMet_synt_N"/>
</dbReference>
<dbReference type="InterPro" id="IPR002133">
    <property type="entry name" value="S-AdoMet_synthetase"/>
</dbReference>
<dbReference type="InterPro" id="IPR022636">
    <property type="entry name" value="S-AdoMet_synthetase_sfam"/>
</dbReference>
<dbReference type="NCBIfam" id="TIGR01034">
    <property type="entry name" value="metK"/>
    <property type="match status" value="1"/>
</dbReference>
<dbReference type="PANTHER" id="PTHR11964">
    <property type="entry name" value="S-ADENOSYLMETHIONINE SYNTHETASE"/>
    <property type="match status" value="1"/>
</dbReference>
<dbReference type="Pfam" id="PF02773">
    <property type="entry name" value="S-AdoMet_synt_C"/>
    <property type="match status" value="1"/>
</dbReference>
<dbReference type="Pfam" id="PF02772">
    <property type="entry name" value="S-AdoMet_synt_M"/>
    <property type="match status" value="1"/>
</dbReference>
<dbReference type="Pfam" id="PF00438">
    <property type="entry name" value="S-AdoMet_synt_N"/>
    <property type="match status" value="1"/>
</dbReference>
<dbReference type="PIRSF" id="PIRSF000497">
    <property type="entry name" value="MAT"/>
    <property type="match status" value="1"/>
</dbReference>
<dbReference type="SUPFAM" id="SSF55973">
    <property type="entry name" value="S-adenosylmethionine synthetase"/>
    <property type="match status" value="3"/>
</dbReference>
<dbReference type="PROSITE" id="PS00376">
    <property type="entry name" value="ADOMET_SYNTHASE_1"/>
    <property type="match status" value="1"/>
</dbReference>
<dbReference type="PROSITE" id="PS00377">
    <property type="entry name" value="ADOMET_SYNTHASE_2"/>
    <property type="match status" value="1"/>
</dbReference>
<comment type="function">
    <text evidence="1">Catalyzes the formation of S-adenosylmethionine (AdoMet) from methionine and ATP. The overall synthetic reaction is composed of two sequential steps, AdoMet formation and the subsequent tripolyphosphate hydrolysis which occurs prior to release of AdoMet from the enzyme.</text>
</comment>
<comment type="catalytic activity">
    <reaction evidence="1">
        <text>L-methionine + ATP + H2O = S-adenosyl-L-methionine + phosphate + diphosphate</text>
        <dbReference type="Rhea" id="RHEA:21080"/>
        <dbReference type="ChEBI" id="CHEBI:15377"/>
        <dbReference type="ChEBI" id="CHEBI:30616"/>
        <dbReference type="ChEBI" id="CHEBI:33019"/>
        <dbReference type="ChEBI" id="CHEBI:43474"/>
        <dbReference type="ChEBI" id="CHEBI:57844"/>
        <dbReference type="ChEBI" id="CHEBI:59789"/>
        <dbReference type="EC" id="2.5.1.6"/>
    </reaction>
</comment>
<comment type="cofactor">
    <cofactor evidence="1">
        <name>Mg(2+)</name>
        <dbReference type="ChEBI" id="CHEBI:18420"/>
    </cofactor>
    <text evidence="1">Binds 2 divalent ions per subunit.</text>
</comment>
<comment type="cofactor">
    <cofactor evidence="1">
        <name>K(+)</name>
        <dbReference type="ChEBI" id="CHEBI:29103"/>
    </cofactor>
    <text evidence="1">Binds 1 potassium ion per subunit.</text>
</comment>
<comment type="pathway">
    <text evidence="1">Amino-acid biosynthesis; S-adenosyl-L-methionine biosynthesis; S-adenosyl-L-methionine from L-methionine: step 1/1.</text>
</comment>
<comment type="subunit">
    <text evidence="1">Homotetramer; dimer of dimers.</text>
</comment>
<comment type="subcellular location">
    <subcellularLocation>
        <location evidence="1">Cytoplasm</location>
    </subcellularLocation>
</comment>
<comment type="similarity">
    <text evidence="1">Belongs to the AdoMet synthase family.</text>
</comment>
<organism>
    <name type="scientific">Yersinia enterocolitica serotype O:8 / biotype 1B (strain NCTC 13174 / 8081)</name>
    <dbReference type="NCBI Taxonomy" id="393305"/>
    <lineage>
        <taxon>Bacteria</taxon>
        <taxon>Pseudomonadati</taxon>
        <taxon>Pseudomonadota</taxon>
        <taxon>Gammaproteobacteria</taxon>
        <taxon>Enterobacterales</taxon>
        <taxon>Yersiniaceae</taxon>
        <taxon>Yersinia</taxon>
    </lineage>
</organism>
<proteinExistence type="inferred from homology"/>